<proteinExistence type="inferred from homology"/>
<protein>
    <recommendedName>
        <fullName evidence="1">Deoxyuridine 5'-triphosphate nucleotidohydrolase</fullName>
        <shortName evidence="1">dUTPase</shortName>
        <ecNumber evidence="1">3.6.1.23</ecNumber>
    </recommendedName>
    <alternativeName>
        <fullName evidence="1">dUTP pyrophosphatase</fullName>
    </alternativeName>
</protein>
<dbReference type="EC" id="3.6.1.23" evidence="1"/>
<dbReference type="EMBL" id="CP001127">
    <property type="protein sequence ID" value="ACF89260.1"/>
    <property type="molecule type" value="Genomic_DNA"/>
</dbReference>
<dbReference type="RefSeq" id="WP_000976078.1">
    <property type="nucleotide sequence ID" value="NC_011094.1"/>
</dbReference>
<dbReference type="SMR" id="B4TZY1"/>
<dbReference type="KEGG" id="sew:SeSA_A3930"/>
<dbReference type="HOGENOM" id="CLU_068508_1_1_6"/>
<dbReference type="UniPathway" id="UPA00610">
    <property type="reaction ID" value="UER00666"/>
</dbReference>
<dbReference type="Proteomes" id="UP000001865">
    <property type="component" value="Chromosome"/>
</dbReference>
<dbReference type="GO" id="GO:0004170">
    <property type="term" value="F:dUTP diphosphatase activity"/>
    <property type="evidence" value="ECO:0007669"/>
    <property type="project" value="UniProtKB-UniRule"/>
</dbReference>
<dbReference type="GO" id="GO:0000287">
    <property type="term" value="F:magnesium ion binding"/>
    <property type="evidence" value="ECO:0007669"/>
    <property type="project" value="UniProtKB-UniRule"/>
</dbReference>
<dbReference type="GO" id="GO:0006226">
    <property type="term" value="P:dUMP biosynthetic process"/>
    <property type="evidence" value="ECO:0007669"/>
    <property type="project" value="UniProtKB-UniRule"/>
</dbReference>
<dbReference type="GO" id="GO:0046081">
    <property type="term" value="P:dUTP catabolic process"/>
    <property type="evidence" value="ECO:0007669"/>
    <property type="project" value="InterPro"/>
</dbReference>
<dbReference type="CDD" id="cd07557">
    <property type="entry name" value="trimeric_dUTPase"/>
    <property type="match status" value="1"/>
</dbReference>
<dbReference type="FunFam" id="2.70.40.10:FF:000002">
    <property type="entry name" value="dUTP diphosphatase"/>
    <property type="match status" value="1"/>
</dbReference>
<dbReference type="Gene3D" id="2.70.40.10">
    <property type="match status" value="1"/>
</dbReference>
<dbReference type="HAMAP" id="MF_00116">
    <property type="entry name" value="dUTPase_bact"/>
    <property type="match status" value="1"/>
</dbReference>
<dbReference type="InterPro" id="IPR008181">
    <property type="entry name" value="dUTPase"/>
</dbReference>
<dbReference type="InterPro" id="IPR029054">
    <property type="entry name" value="dUTPase-like"/>
</dbReference>
<dbReference type="InterPro" id="IPR036157">
    <property type="entry name" value="dUTPase-like_sf"/>
</dbReference>
<dbReference type="InterPro" id="IPR033704">
    <property type="entry name" value="dUTPase_trimeric"/>
</dbReference>
<dbReference type="NCBIfam" id="TIGR00576">
    <property type="entry name" value="dut"/>
    <property type="match status" value="1"/>
</dbReference>
<dbReference type="NCBIfam" id="NF001862">
    <property type="entry name" value="PRK00601.1"/>
    <property type="match status" value="1"/>
</dbReference>
<dbReference type="PANTHER" id="PTHR11241">
    <property type="entry name" value="DEOXYURIDINE 5'-TRIPHOSPHATE NUCLEOTIDOHYDROLASE"/>
    <property type="match status" value="1"/>
</dbReference>
<dbReference type="PANTHER" id="PTHR11241:SF0">
    <property type="entry name" value="DEOXYURIDINE 5'-TRIPHOSPHATE NUCLEOTIDOHYDROLASE"/>
    <property type="match status" value="1"/>
</dbReference>
<dbReference type="Pfam" id="PF00692">
    <property type="entry name" value="dUTPase"/>
    <property type="match status" value="1"/>
</dbReference>
<dbReference type="SUPFAM" id="SSF51283">
    <property type="entry name" value="dUTPase-like"/>
    <property type="match status" value="1"/>
</dbReference>
<keyword id="KW-0378">Hydrolase</keyword>
<keyword id="KW-0460">Magnesium</keyword>
<keyword id="KW-0479">Metal-binding</keyword>
<keyword id="KW-0546">Nucleotide metabolism</keyword>
<name>DUT_SALSV</name>
<gene>
    <name evidence="1" type="primary">dut</name>
    <name type="ordered locus">SeSA_A3930</name>
</gene>
<reference key="1">
    <citation type="journal article" date="2011" name="J. Bacteriol.">
        <title>Comparative genomics of 28 Salmonella enterica isolates: evidence for CRISPR-mediated adaptive sublineage evolution.</title>
        <authorList>
            <person name="Fricke W.F."/>
            <person name="Mammel M.K."/>
            <person name="McDermott P.F."/>
            <person name="Tartera C."/>
            <person name="White D.G."/>
            <person name="Leclerc J.E."/>
            <person name="Ravel J."/>
            <person name="Cebula T.A."/>
        </authorList>
    </citation>
    <scope>NUCLEOTIDE SEQUENCE [LARGE SCALE GENOMIC DNA]</scope>
    <source>
        <strain>CVM19633</strain>
    </source>
</reference>
<sequence>MMKKIDVKILDPRVGQQFPLPTYATSGSAGLDLRACLDDAVELAPGATTLVPTGLAIHIADPSLAAVMLPRSGLGHKHGIVLGNLVGLIDSDYQGQLMVSIWNRGQDSFTIEPGERIAQMVFVPVVQAEFNLVEAFDATERGEGGFGHSGRK</sequence>
<evidence type="ECO:0000255" key="1">
    <source>
        <dbReference type="HAMAP-Rule" id="MF_00116"/>
    </source>
</evidence>
<comment type="function">
    <text evidence="1">This enzyme is involved in nucleotide metabolism: it produces dUMP, the immediate precursor of thymidine nucleotides and it decreases the intracellular concentration of dUTP so that uracil cannot be incorporated into DNA.</text>
</comment>
<comment type="catalytic activity">
    <reaction evidence="1">
        <text>dUTP + H2O = dUMP + diphosphate + H(+)</text>
        <dbReference type="Rhea" id="RHEA:10248"/>
        <dbReference type="ChEBI" id="CHEBI:15377"/>
        <dbReference type="ChEBI" id="CHEBI:15378"/>
        <dbReference type="ChEBI" id="CHEBI:33019"/>
        <dbReference type="ChEBI" id="CHEBI:61555"/>
        <dbReference type="ChEBI" id="CHEBI:246422"/>
        <dbReference type="EC" id="3.6.1.23"/>
    </reaction>
</comment>
<comment type="cofactor">
    <cofactor evidence="1">
        <name>Mg(2+)</name>
        <dbReference type="ChEBI" id="CHEBI:18420"/>
    </cofactor>
</comment>
<comment type="pathway">
    <text evidence="1">Pyrimidine metabolism; dUMP biosynthesis; dUMP from dCTP (dUTP route): step 2/2.</text>
</comment>
<comment type="similarity">
    <text evidence="1">Belongs to the dUTPase family.</text>
</comment>
<accession>B4TZY1</accession>
<organism>
    <name type="scientific">Salmonella schwarzengrund (strain CVM19633)</name>
    <dbReference type="NCBI Taxonomy" id="439843"/>
    <lineage>
        <taxon>Bacteria</taxon>
        <taxon>Pseudomonadati</taxon>
        <taxon>Pseudomonadota</taxon>
        <taxon>Gammaproteobacteria</taxon>
        <taxon>Enterobacterales</taxon>
        <taxon>Enterobacteriaceae</taxon>
        <taxon>Salmonella</taxon>
    </lineage>
</organism>
<feature type="chain" id="PRO_1000094993" description="Deoxyuridine 5'-triphosphate nucleotidohydrolase">
    <location>
        <begin position="1"/>
        <end position="152"/>
    </location>
</feature>
<feature type="binding site" evidence="1">
    <location>
        <begin position="71"/>
        <end position="73"/>
    </location>
    <ligand>
        <name>substrate</name>
    </ligand>
</feature>
<feature type="binding site" evidence="1">
    <location>
        <position position="84"/>
    </location>
    <ligand>
        <name>substrate</name>
    </ligand>
</feature>
<feature type="binding site" evidence="1">
    <location>
        <begin position="88"/>
        <end position="90"/>
    </location>
    <ligand>
        <name>substrate</name>
    </ligand>
</feature>
<feature type="binding site" evidence="1">
    <location>
        <position position="98"/>
    </location>
    <ligand>
        <name>substrate</name>
    </ligand>
</feature>